<comment type="function">
    <text evidence="1">Allows the formation of correctly charged Asn-tRNA(Asn) or Gln-tRNA(Gln) through the transamidation of misacylated Asp-tRNA(Asn) or Glu-tRNA(Gln) in organisms which lack either or both of asparaginyl-tRNA or glutaminyl-tRNA synthetases. The reaction takes place in the presence of glutamine and ATP through an activated phospho-Asp-tRNA(Asn) or phospho-Glu-tRNA(Gln).</text>
</comment>
<comment type="catalytic activity">
    <reaction evidence="1">
        <text>L-glutamyl-tRNA(Gln) + L-glutamine + ATP + H2O = L-glutaminyl-tRNA(Gln) + L-glutamate + ADP + phosphate + H(+)</text>
        <dbReference type="Rhea" id="RHEA:17521"/>
        <dbReference type="Rhea" id="RHEA-COMP:9681"/>
        <dbReference type="Rhea" id="RHEA-COMP:9684"/>
        <dbReference type="ChEBI" id="CHEBI:15377"/>
        <dbReference type="ChEBI" id="CHEBI:15378"/>
        <dbReference type="ChEBI" id="CHEBI:29985"/>
        <dbReference type="ChEBI" id="CHEBI:30616"/>
        <dbReference type="ChEBI" id="CHEBI:43474"/>
        <dbReference type="ChEBI" id="CHEBI:58359"/>
        <dbReference type="ChEBI" id="CHEBI:78520"/>
        <dbReference type="ChEBI" id="CHEBI:78521"/>
        <dbReference type="ChEBI" id="CHEBI:456216"/>
    </reaction>
</comment>
<comment type="catalytic activity">
    <reaction evidence="1">
        <text>L-aspartyl-tRNA(Asn) + L-glutamine + ATP + H2O = L-asparaginyl-tRNA(Asn) + L-glutamate + ADP + phosphate + 2 H(+)</text>
        <dbReference type="Rhea" id="RHEA:14513"/>
        <dbReference type="Rhea" id="RHEA-COMP:9674"/>
        <dbReference type="Rhea" id="RHEA-COMP:9677"/>
        <dbReference type="ChEBI" id="CHEBI:15377"/>
        <dbReference type="ChEBI" id="CHEBI:15378"/>
        <dbReference type="ChEBI" id="CHEBI:29985"/>
        <dbReference type="ChEBI" id="CHEBI:30616"/>
        <dbReference type="ChEBI" id="CHEBI:43474"/>
        <dbReference type="ChEBI" id="CHEBI:58359"/>
        <dbReference type="ChEBI" id="CHEBI:78515"/>
        <dbReference type="ChEBI" id="CHEBI:78516"/>
        <dbReference type="ChEBI" id="CHEBI:456216"/>
    </reaction>
</comment>
<comment type="subunit">
    <text evidence="1">Heterotrimer of A, B and C subunits.</text>
</comment>
<comment type="similarity">
    <text evidence="1">Belongs to the GatB/GatE family. GatB subfamily.</text>
</comment>
<sequence length="500" mass="54714">MSIIDTRTPEPKRFISGATGDWEVVIGMEVHAQVTSESKLFSGASTAFGAEPNSNVSLVDAAMPGMLPVINLECVRQAVRTGIGLNAQINLKSVFDRKNYFYPDLPQGYQISQFKQPIVGEGKIMISVGPDNKGQFEDVEIGIERLHLEQDAGKSMHDQHPTMSYVDLNRSGVALMEIVSKPDLRSSDEARAYLTKLRTIVRYLGTCDGNMDEGSMRADVNVSVRRPGGEFGTRCEIKNVNSIRFVGQAIEYEARRQIAILEDGGVIDQETRLFDPVKGETRSMRSKEEAHDYRYFPDPDLLPLEFDQAFVDALAAKLPELPDVKKQRLVETLGISVYDASILVTEKAIADYYEAVAEGRDGKAAANWVINDLLGALNKAGKDIEESPISPAQLGAIIDLIKEGTISGKIAKDLFEIVWNEGGDPKKLVEERGMKQVTDTGAIEKAVDDVIAANPDKVEQAKAKPTLAGWFVGQVMKATGGKANPQAVNELVKSKLGIEE</sequence>
<protein>
    <recommendedName>
        <fullName evidence="1">Aspartyl/glutamyl-tRNA(Asn/Gln) amidotransferase subunit B</fullName>
        <shortName evidence="1">Asp/Glu-ADT subunit B</shortName>
        <ecNumber evidence="1">6.3.5.-</ecNumber>
    </recommendedName>
</protein>
<evidence type="ECO:0000255" key="1">
    <source>
        <dbReference type="HAMAP-Rule" id="MF_00121"/>
    </source>
</evidence>
<keyword id="KW-0067">ATP-binding</keyword>
<keyword id="KW-0436">Ligase</keyword>
<keyword id="KW-0547">Nucleotide-binding</keyword>
<keyword id="KW-0648">Protein biosynthesis</keyword>
<name>GATB_BRUA1</name>
<feature type="chain" id="PRO_1000095189" description="Aspartyl/glutamyl-tRNA(Asn/Gln) amidotransferase subunit B">
    <location>
        <begin position="1"/>
        <end position="500"/>
    </location>
</feature>
<reference key="1">
    <citation type="journal article" date="2008" name="PLoS ONE">
        <title>Genome sequence of Brucella abortus vaccine strain S19 compared to virulent strains yields candidate virulence genes.</title>
        <authorList>
            <person name="Crasta O.R."/>
            <person name="Folkerts O."/>
            <person name="Fei Z."/>
            <person name="Mane S.P."/>
            <person name="Evans C."/>
            <person name="Martino-Catt S."/>
            <person name="Bricker B."/>
            <person name="Yu G."/>
            <person name="Du L."/>
            <person name="Sobral B.W."/>
        </authorList>
    </citation>
    <scope>NUCLEOTIDE SEQUENCE [LARGE SCALE GENOMIC DNA]</scope>
    <source>
        <strain>S19</strain>
    </source>
</reference>
<dbReference type="EC" id="6.3.5.-" evidence="1"/>
<dbReference type="EMBL" id="CP000887">
    <property type="protein sequence ID" value="ACD72379.1"/>
    <property type="molecule type" value="Genomic_DNA"/>
</dbReference>
<dbReference type="RefSeq" id="WP_002964030.1">
    <property type="nucleotide sequence ID" value="NC_010742.1"/>
</dbReference>
<dbReference type="SMR" id="B2S5D2"/>
<dbReference type="GeneID" id="97533805"/>
<dbReference type="KEGG" id="bmc:BAbS19_I08580"/>
<dbReference type="HOGENOM" id="CLU_019240_0_0_5"/>
<dbReference type="Proteomes" id="UP000002565">
    <property type="component" value="Chromosome 1"/>
</dbReference>
<dbReference type="GO" id="GO:0050566">
    <property type="term" value="F:asparaginyl-tRNA synthase (glutamine-hydrolyzing) activity"/>
    <property type="evidence" value="ECO:0007669"/>
    <property type="project" value="RHEA"/>
</dbReference>
<dbReference type="GO" id="GO:0005524">
    <property type="term" value="F:ATP binding"/>
    <property type="evidence" value="ECO:0007669"/>
    <property type="project" value="UniProtKB-KW"/>
</dbReference>
<dbReference type="GO" id="GO:0050567">
    <property type="term" value="F:glutaminyl-tRNA synthase (glutamine-hydrolyzing) activity"/>
    <property type="evidence" value="ECO:0007669"/>
    <property type="project" value="UniProtKB-UniRule"/>
</dbReference>
<dbReference type="GO" id="GO:0070681">
    <property type="term" value="P:glutaminyl-tRNAGln biosynthesis via transamidation"/>
    <property type="evidence" value="ECO:0007669"/>
    <property type="project" value="TreeGrafter"/>
</dbReference>
<dbReference type="GO" id="GO:0006412">
    <property type="term" value="P:translation"/>
    <property type="evidence" value="ECO:0007669"/>
    <property type="project" value="UniProtKB-UniRule"/>
</dbReference>
<dbReference type="FunFam" id="1.10.10.410:FF:000001">
    <property type="entry name" value="Aspartyl/glutamyl-tRNA(Asn/Gln) amidotransferase subunit B"/>
    <property type="match status" value="1"/>
</dbReference>
<dbReference type="Gene3D" id="1.10.10.410">
    <property type="match status" value="1"/>
</dbReference>
<dbReference type="Gene3D" id="1.10.150.380">
    <property type="entry name" value="GatB domain, N-terminal subdomain"/>
    <property type="match status" value="1"/>
</dbReference>
<dbReference type="HAMAP" id="MF_00121">
    <property type="entry name" value="GatB"/>
    <property type="match status" value="1"/>
</dbReference>
<dbReference type="InterPro" id="IPR017959">
    <property type="entry name" value="Asn/Gln-tRNA_amidoTrfase_suB/E"/>
</dbReference>
<dbReference type="InterPro" id="IPR006075">
    <property type="entry name" value="Asn/Gln-tRNA_Trfase_suB/E_cat"/>
</dbReference>
<dbReference type="InterPro" id="IPR018027">
    <property type="entry name" value="Asn/Gln_amidotransferase"/>
</dbReference>
<dbReference type="InterPro" id="IPR003789">
    <property type="entry name" value="Asn/Gln_tRNA_amidoTrase-B-like"/>
</dbReference>
<dbReference type="InterPro" id="IPR004413">
    <property type="entry name" value="GatB"/>
</dbReference>
<dbReference type="InterPro" id="IPR042114">
    <property type="entry name" value="GatB_C_1"/>
</dbReference>
<dbReference type="InterPro" id="IPR023168">
    <property type="entry name" value="GatB_Yqey_C_2"/>
</dbReference>
<dbReference type="InterPro" id="IPR017958">
    <property type="entry name" value="Gln-tRNA_amidoTrfase_suB_CS"/>
</dbReference>
<dbReference type="InterPro" id="IPR014746">
    <property type="entry name" value="Gln_synth/guanido_kin_cat_dom"/>
</dbReference>
<dbReference type="NCBIfam" id="TIGR00133">
    <property type="entry name" value="gatB"/>
    <property type="match status" value="1"/>
</dbReference>
<dbReference type="NCBIfam" id="NF004012">
    <property type="entry name" value="PRK05477.1-2"/>
    <property type="match status" value="1"/>
</dbReference>
<dbReference type="NCBIfam" id="NF004014">
    <property type="entry name" value="PRK05477.1-4"/>
    <property type="match status" value="1"/>
</dbReference>
<dbReference type="NCBIfam" id="NF004015">
    <property type="entry name" value="PRK05477.1-5"/>
    <property type="match status" value="1"/>
</dbReference>
<dbReference type="PANTHER" id="PTHR11659">
    <property type="entry name" value="GLUTAMYL-TRNA GLN AMIDOTRANSFERASE SUBUNIT B MITOCHONDRIAL AND PROKARYOTIC PET112-RELATED"/>
    <property type="match status" value="1"/>
</dbReference>
<dbReference type="PANTHER" id="PTHR11659:SF0">
    <property type="entry name" value="GLUTAMYL-TRNA(GLN) AMIDOTRANSFERASE SUBUNIT B, MITOCHONDRIAL"/>
    <property type="match status" value="1"/>
</dbReference>
<dbReference type="Pfam" id="PF02934">
    <property type="entry name" value="GatB_N"/>
    <property type="match status" value="1"/>
</dbReference>
<dbReference type="Pfam" id="PF02637">
    <property type="entry name" value="GatB_Yqey"/>
    <property type="match status" value="1"/>
</dbReference>
<dbReference type="SMART" id="SM00845">
    <property type="entry name" value="GatB_Yqey"/>
    <property type="match status" value="1"/>
</dbReference>
<dbReference type="SUPFAM" id="SSF89095">
    <property type="entry name" value="GatB/YqeY motif"/>
    <property type="match status" value="1"/>
</dbReference>
<dbReference type="SUPFAM" id="SSF55931">
    <property type="entry name" value="Glutamine synthetase/guanido kinase"/>
    <property type="match status" value="1"/>
</dbReference>
<dbReference type="PROSITE" id="PS01234">
    <property type="entry name" value="GATB"/>
    <property type="match status" value="1"/>
</dbReference>
<proteinExistence type="inferred from homology"/>
<accession>B2S5D2</accession>
<organism>
    <name type="scientific">Brucella abortus (strain S19)</name>
    <dbReference type="NCBI Taxonomy" id="430066"/>
    <lineage>
        <taxon>Bacteria</taxon>
        <taxon>Pseudomonadati</taxon>
        <taxon>Pseudomonadota</taxon>
        <taxon>Alphaproteobacteria</taxon>
        <taxon>Hyphomicrobiales</taxon>
        <taxon>Brucellaceae</taxon>
        <taxon>Brucella/Ochrobactrum group</taxon>
        <taxon>Brucella</taxon>
    </lineage>
</organism>
<gene>
    <name evidence="1" type="primary">gatB</name>
    <name type="ordered locus">BAbS19_I08580</name>
</gene>